<feature type="chain" id="PRO_1000121074" description="Beta-hexosaminidase">
    <location>
        <begin position="1"/>
        <end position="341"/>
    </location>
</feature>
<feature type="active site" description="Proton donor/acceptor" evidence="1">
    <location>
        <position position="176"/>
    </location>
</feature>
<feature type="active site" description="Nucleophile" evidence="1">
    <location>
        <position position="248"/>
    </location>
</feature>
<feature type="binding site" evidence="1">
    <location>
        <position position="62"/>
    </location>
    <ligand>
        <name>substrate</name>
    </ligand>
</feature>
<feature type="binding site" evidence="1">
    <location>
        <position position="70"/>
    </location>
    <ligand>
        <name>substrate</name>
    </ligand>
</feature>
<feature type="binding site" evidence="1">
    <location>
        <position position="133"/>
    </location>
    <ligand>
        <name>substrate</name>
    </ligand>
</feature>
<feature type="binding site" evidence="1">
    <location>
        <begin position="163"/>
        <end position="164"/>
    </location>
    <ligand>
        <name>substrate</name>
    </ligand>
</feature>
<feature type="site" description="Important for catalytic activity" evidence="1">
    <location>
        <position position="174"/>
    </location>
</feature>
<organism>
    <name type="scientific">Shigella boydii serotype 18 (strain CDC 3083-94 / BS512)</name>
    <dbReference type="NCBI Taxonomy" id="344609"/>
    <lineage>
        <taxon>Bacteria</taxon>
        <taxon>Pseudomonadati</taxon>
        <taxon>Pseudomonadota</taxon>
        <taxon>Gammaproteobacteria</taxon>
        <taxon>Enterobacterales</taxon>
        <taxon>Enterobacteriaceae</taxon>
        <taxon>Shigella</taxon>
    </lineage>
</organism>
<dbReference type="EC" id="3.2.1.52" evidence="1"/>
<dbReference type="EMBL" id="CP001063">
    <property type="protein sequence ID" value="ACD06617.1"/>
    <property type="molecule type" value="Genomic_DNA"/>
</dbReference>
<dbReference type="RefSeq" id="WP_000529288.1">
    <property type="nucleotide sequence ID" value="NC_010658.1"/>
</dbReference>
<dbReference type="SMR" id="B2U513"/>
<dbReference type="STRING" id="344609.SbBS512_E2216"/>
<dbReference type="CAZy" id="GH3">
    <property type="family name" value="Glycoside Hydrolase Family 3"/>
</dbReference>
<dbReference type="KEGG" id="sbc:SbBS512_E2216"/>
<dbReference type="HOGENOM" id="CLU_008392_0_0_6"/>
<dbReference type="UniPathway" id="UPA00544"/>
<dbReference type="Proteomes" id="UP000001030">
    <property type="component" value="Chromosome"/>
</dbReference>
<dbReference type="GO" id="GO:0005737">
    <property type="term" value="C:cytoplasm"/>
    <property type="evidence" value="ECO:0007669"/>
    <property type="project" value="UniProtKB-SubCell"/>
</dbReference>
<dbReference type="GO" id="GO:0004563">
    <property type="term" value="F:beta-N-acetylhexosaminidase activity"/>
    <property type="evidence" value="ECO:0007669"/>
    <property type="project" value="UniProtKB-UniRule"/>
</dbReference>
<dbReference type="GO" id="GO:0005975">
    <property type="term" value="P:carbohydrate metabolic process"/>
    <property type="evidence" value="ECO:0007669"/>
    <property type="project" value="InterPro"/>
</dbReference>
<dbReference type="GO" id="GO:0051301">
    <property type="term" value="P:cell division"/>
    <property type="evidence" value="ECO:0007669"/>
    <property type="project" value="UniProtKB-KW"/>
</dbReference>
<dbReference type="GO" id="GO:0071555">
    <property type="term" value="P:cell wall organization"/>
    <property type="evidence" value="ECO:0007669"/>
    <property type="project" value="UniProtKB-KW"/>
</dbReference>
<dbReference type="GO" id="GO:0009252">
    <property type="term" value="P:peptidoglycan biosynthetic process"/>
    <property type="evidence" value="ECO:0007669"/>
    <property type="project" value="UniProtKB-KW"/>
</dbReference>
<dbReference type="GO" id="GO:0009254">
    <property type="term" value="P:peptidoglycan turnover"/>
    <property type="evidence" value="ECO:0007669"/>
    <property type="project" value="UniProtKB-UniRule"/>
</dbReference>
<dbReference type="GO" id="GO:0008360">
    <property type="term" value="P:regulation of cell shape"/>
    <property type="evidence" value="ECO:0007669"/>
    <property type="project" value="UniProtKB-KW"/>
</dbReference>
<dbReference type="FunFam" id="3.20.20.300:FF:000001">
    <property type="entry name" value="Beta-hexosaminidase"/>
    <property type="match status" value="1"/>
</dbReference>
<dbReference type="Gene3D" id="3.20.20.300">
    <property type="entry name" value="Glycoside hydrolase, family 3, N-terminal domain"/>
    <property type="match status" value="1"/>
</dbReference>
<dbReference type="HAMAP" id="MF_00364">
    <property type="entry name" value="NagZ"/>
    <property type="match status" value="1"/>
</dbReference>
<dbReference type="InterPro" id="IPR022956">
    <property type="entry name" value="Beta_hexosaminidase_bac"/>
</dbReference>
<dbReference type="InterPro" id="IPR019800">
    <property type="entry name" value="Glyco_hydro_3_AS"/>
</dbReference>
<dbReference type="InterPro" id="IPR001764">
    <property type="entry name" value="Glyco_hydro_3_N"/>
</dbReference>
<dbReference type="InterPro" id="IPR036962">
    <property type="entry name" value="Glyco_hydro_3_N_sf"/>
</dbReference>
<dbReference type="InterPro" id="IPR017853">
    <property type="entry name" value="Glycoside_hydrolase_SF"/>
</dbReference>
<dbReference type="InterPro" id="IPR050226">
    <property type="entry name" value="NagZ_Beta-hexosaminidase"/>
</dbReference>
<dbReference type="NCBIfam" id="NF003740">
    <property type="entry name" value="PRK05337.1"/>
    <property type="match status" value="1"/>
</dbReference>
<dbReference type="PANTHER" id="PTHR30480:SF13">
    <property type="entry name" value="BETA-HEXOSAMINIDASE"/>
    <property type="match status" value="1"/>
</dbReference>
<dbReference type="PANTHER" id="PTHR30480">
    <property type="entry name" value="BETA-HEXOSAMINIDASE-RELATED"/>
    <property type="match status" value="1"/>
</dbReference>
<dbReference type="Pfam" id="PF00933">
    <property type="entry name" value="Glyco_hydro_3"/>
    <property type="match status" value="1"/>
</dbReference>
<dbReference type="SUPFAM" id="SSF51445">
    <property type="entry name" value="(Trans)glycosidases"/>
    <property type="match status" value="1"/>
</dbReference>
<dbReference type="PROSITE" id="PS00775">
    <property type="entry name" value="GLYCOSYL_HYDROL_F3"/>
    <property type="match status" value="1"/>
</dbReference>
<sequence>MGPVMLDVEGYELDAEEREILAHPLVGGLILFTRNYHDPAQLRELVRQIRAASRNHLVVAVDQEGGRVQRFREGFTRLPAAQSFAALLGMEEGGKLAQEAGWLMASEMIAMDIDISFAPVLDVGHISAAIGERSYHADPEKALAIASRFIDGMHEAGMKTTGKHFPGHGAVTADSHKETPCDPRPQAEIRAKDMSVFSTLIRENKLDAIMPAHVIYSDVDPRPASGSSYWLKTVLRQELCFDGVIFSDDLSMEGAAIMGSYAERGQASLDAGCDMILVCNNRKGAVSVLDNLSPIKAERVTRLYHKGSFSRQELMDSARWKASSTRLNQLHERWQEEKAGH</sequence>
<keyword id="KW-0131">Cell cycle</keyword>
<keyword id="KW-0132">Cell division</keyword>
<keyword id="KW-0133">Cell shape</keyword>
<keyword id="KW-0961">Cell wall biogenesis/degradation</keyword>
<keyword id="KW-0963">Cytoplasm</keyword>
<keyword id="KW-0326">Glycosidase</keyword>
<keyword id="KW-0378">Hydrolase</keyword>
<keyword id="KW-0573">Peptidoglycan synthesis</keyword>
<keyword id="KW-1185">Reference proteome</keyword>
<reference key="1">
    <citation type="submission" date="2008-05" db="EMBL/GenBank/DDBJ databases">
        <title>Complete sequence of Shigella boydii serotype 18 strain BS512.</title>
        <authorList>
            <person name="Rasko D.A."/>
            <person name="Rosovitz M."/>
            <person name="Maurelli A.T."/>
            <person name="Myers G."/>
            <person name="Seshadri R."/>
            <person name="Cer R."/>
            <person name="Jiang L."/>
            <person name="Ravel J."/>
            <person name="Sebastian Y."/>
        </authorList>
    </citation>
    <scope>NUCLEOTIDE SEQUENCE [LARGE SCALE GENOMIC DNA]</scope>
    <source>
        <strain>CDC 3083-94 / BS512</strain>
    </source>
</reference>
<accession>B2U513</accession>
<evidence type="ECO:0000255" key="1">
    <source>
        <dbReference type="HAMAP-Rule" id="MF_00364"/>
    </source>
</evidence>
<comment type="function">
    <text evidence="1">Plays a role in peptidoglycan recycling by cleaving the terminal beta-1,4-linked N-acetylglucosamine (GlcNAc) from peptide-linked peptidoglycan fragments, giving rise to free GlcNAc, anhydro-N-acetylmuramic acid and anhydro-N-acetylmuramic acid-linked peptides.</text>
</comment>
<comment type="catalytic activity">
    <reaction evidence="1">
        <text>Hydrolysis of terminal non-reducing N-acetyl-D-hexosamine residues in N-acetyl-beta-D-hexosaminides.</text>
        <dbReference type="EC" id="3.2.1.52"/>
    </reaction>
</comment>
<comment type="pathway">
    <text evidence="1">Cell wall biogenesis; peptidoglycan recycling.</text>
</comment>
<comment type="subcellular location">
    <subcellularLocation>
        <location evidence="1">Cytoplasm</location>
    </subcellularLocation>
</comment>
<comment type="similarity">
    <text evidence="1">Belongs to the glycosyl hydrolase 3 family. NagZ subfamily.</text>
</comment>
<name>NAGZ_SHIB3</name>
<gene>
    <name evidence="1" type="primary">nagZ</name>
    <name type="ordered locus">SbBS512_E2216</name>
</gene>
<protein>
    <recommendedName>
        <fullName evidence="1">Beta-hexosaminidase</fullName>
        <ecNumber evidence="1">3.2.1.52</ecNumber>
    </recommendedName>
    <alternativeName>
        <fullName evidence="1">Beta-N-acetylhexosaminidase</fullName>
    </alternativeName>
    <alternativeName>
        <fullName evidence="1">N-acetyl-beta-glucosaminidase</fullName>
    </alternativeName>
</protein>
<proteinExistence type="inferred from homology"/>